<name>OPSD_ATHBO</name>
<gene>
    <name type="primary">rho</name>
</gene>
<protein>
    <recommendedName>
        <fullName>Rhodopsin</fullName>
    </recommendedName>
</protein>
<comment type="function">
    <text evidence="1 2 3">Photoreceptor required for image-forming vision at low light intensity. While most salt water fish species use retinal as chromophore, most freshwater fish use 3-dehydroretinal, or a mixture of retinal and 3-dehydroretinal (By similarity). Light-induced isomerization of 11-cis to all-trans retinal triggers a conformational change that activates signaling via G-proteins. Subsequent receptor phosphorylation mediates displacement of the bound G-protein alpha subunit by arrestin and terminates signaling (By similarity).</text>
</comment>
<comment type="subcellular location">
    <subcellularLocation>
        <location evidence="2">Membrane</location>
        <topology evidence="2">Multi-pass membrane protein</topology>
    </subcellularLocation>
    <subcellularLocation>
        <location evidence="4">Cell projection</location>
        <location evidence="4">Cilium</location>
        <location evidence="4">Photoreceptor outer segment</location>
    </subcellularLocation>
    <text evidence="2">Synthesized in the inner segment (IS) of rod photoreceptor cells before vectorial transport to disk membranes in the rod outer segment (OS) photosensory cilia.</text>
</comment>
<comment type="PTM">
    <text evidence="1">Phosphorylated on some or all of the serine and threonine residues present in the C-terminal region.</text>
</comment>
<comment type="PTM">
    <text evidence="1">Contains one covalently linked retinal chromophore.</text>
</comment>
<comment type="similarity">
    <text evidence="6">Belongs to the G-protein coupled receptor 1 family. Opsin subfamily.</text>
</comment>
<sequence length="354" mass="39659">MNGTEGPYFYIPMLNTTGVVRSPYEYPQYYLVNPAAYAVLGAYMFFLILVGFPINFLTLYVTIEHKKLRTPLNYILLNLAVADLFMVFGGFTTTIYTSMHGYFVLGRLGCNVEGFSATLGGEIALWSLVVLAIERWVVVCKPISNFRFGENHAIMGVAFTWFMAAACAVPPLFGWSRYIPEGMQCSCGIDYYTRAEGFNNESFVIYMFTCHFCIPLMVVFFCYGRLVCAVKEAAAAQQESETTQRAEREVTRMVIIMVVSFLVSWVPYASVAWYIFTHQGSEFGPLFMTIPAFFAKSSSIYNPMIYICMNKQFRHCMITTLCCGKNPFEEEEGASSTASKTEASSVSSSSVSPA</sequence>
<accession>Q9YGZ1</accession>
<evidence type="ECO:0000250" key="1">
    <source>
        <dbReference type="UniProtKB" id="P02699"/>
    </source>
</evidence>
<evidence type="ECO:0000250" key="2">
    <source>
        <dbReference type="UniProtKB" id="P08100"/>
    </source>
</evidence>
<evidence type="ECO:0000250" key="3">
    <source>
        <dbReference type="UniProtKB" id="P32309"/>
    </source>
</evidence>
<evidence type="ECO:0000250" key="4">
    <source>
        <dbReference type="UniProtKB" id="P35359"/>
    </source>
</evidence>
<evidence type="ECO:0000255" key="5"/>
<evidence type="ECO:0000255" key="6">
    <source>
        <dbReference type="PROSITE-ProRule" id="PRU00521"/>
    </source>
</evidence>
<evidence type="ECO:0000256" key="7">
    <source>
        <dbReference type="SAM" id="MobiDB-lite"/>
    </source>
</evidence>
<evidence type="ECO:0000305" key="8"/>
<feature type="chain" id="PRO_0000197650" description="Rhodopsin">
    <location>
        <begin position="1"/>
        <end position="354"/>
    </location>
</feature>
<feature type="topological domain" description="Extracellular" evidence="8">
    <location>
        <begin position="1"/>
        <end position="36"/>
    </location>
</feature>
<feature type="transmembrane region" description="Helical; Name=1" evidence="1">
    <location>
        <begin position="37"/>
        <end position="61"/>
    </location>
</feature>
<feature type="topological domain" description="Cytoplasmic" evidence="8">
    <location>
        <begin position="62"/>
        <end position="73"/>
    </location>
</feature>
<feature type="transmembrane region" description="Helical; Name=2" evidence="1">
    <location>
        <begin position="74"/>
        <end position="96"/>
    </location>
</feature>
<feature type="topological domain" description="Extracellular" evidence="8">
    <location>
        <begin position="97"/>
        <end position="110"/>
    </location>
</feature>
<feature type="transmembrane region" description="Helical; Name=3" evidence="1">
    <location>
        <begin position="111"/>
        <end position="133"/>
    </location>
</feature>
<feature type="topological domain" description="Cytoplasmic" evidence="8">
    <location>
        <begin position="134"/>
        <end position="152"/>
    </location>
</feature>
<feature type="transmembrane region" description="Helical; Name=4" evidence="1">
    <location>
        <begin position="153"/>
        <end position="173"/>
    </location>
</feature>
<feature type="topological domain" description="Extracellular" evidence="8">
    <location>
        <begin position="174"/>
        <end position="202"/>
    </location>
</feature>
<feature type="transmembrane region" description="Helical; Name=5" evidence="1">
    <location>
        <begin position="203"/>
        <end position="224"/>
    </location>
</feature>
<feature type="topological domain" description="Cytoplasmic" evidence="8">
    <location>
        <begin position="225"/>
        <end position="252"/>
    </location>
</feature>
<feature type="transmembrane region" description="Helical; Name=6" evidence="1">
    <location>
        <begin position="253"/>
        <end position="274"/>
    </location>
</feature>
<feature type="topological domain" description="Extracellular" evidence="8">
    <location>
        <begin position="275"/>
        <end position="286"/>
    </location>
</feature>
<feature type="transmembrane region" description="Helical; Name=7" evidence="1">
    <location>
        <begin position="287"/>
        <end position="308"/>
    </location>
</feature>
<feature type="topological domain" description="Cytoplasmic" evidence="8">
    <location>
        <begin position="309"/>
        <end position="354"/>
    </location>
</feature>
<feature type="region of interest" description="Disordered" evidence="7">
    <location>
        <begin position="329"/>
        <end position="354"/>
    </location>
</feature>
<feature type="short sequence motif" description="'Ionic lock' involved in activated form stabilization" evidence="1">
    <location>
        <begin position="134"/>
        <end position="136"/>
    </location>
</feature>
<feature type="compositionally biased region" description="Low complexity" evidence="7">
    <location>
        <begin position="334"/>
        <end position="354"/>
    </location>
</feature>
<feature type="site" description="Plays an important role in the conformation switch to the active conformation" evidence="1">
    <location>
        <position position="113"/>
    </location>
</feature>
<feature type="modified residue" description="N6-(retinylidene)lysine" evidence="1">
    <location>
        <position position="296"/>
    </location>
</feature>
<feature type="lipid moiety-binding region" description="S-palmitoyl cysteine" evidence="1">
    <location>
        <position position="322"/>
    </location>
</feature>
<feature type="lipid moiety-binding region" description="S-palmitoyl cysteine" evidence="1">
    <location>
        <position position="323"/>
    </location>
</feature>
<feature type="glycosylation site" description="N-linked (GlcNAc...) asparagine" evidence="5">
    <location>
        <position position="2"/>
    </location>
</feature>
<feature type="glycosylation site" description="N-linked (GlcNAc...) asparagine" evidence="5">
    <location>
        <position position="15"/>
    </location>
</feature>
<feature type="glycosylation site" description="N-linked (GlcNAc...) asparagine" evidence="5">
    <location>
        <position position="200"/>
    </location>
</feature>
<feature type="disulfide bond" evidence="6">
    <location>
        <begin position="110"/>
        <end position="187"/>
    </location>
</feature>
<keyword id="KW-0966">Cell projection</keyword>
<keyword id="KW-0157">Chromophore</keyword>
<keyword id="KW-1015">Disulfide bond</keyword>
<keyword id="KW-0297">G-protein coupled receptor</keyword>
<keyword id="KW-0325">Glycoprotein</keyword>
<keyword id="KW-0449">Lipoprotein</keyword>
<keyword id="KW-0472">Membrane</keyword>
<keyword id="KW-0564">Palmitate</keyword>
<keyword id="KW-0597">Phosphoprotein</keyword>
<keyword id="KW-0600">Photoreceptor protein</keyword>
<keyword id="KW-0675">Receptor</keyword>
<keyword id="KW-0681">Retinal protein</keyword>
<keyword id="KW-0716">Sensory transduction</keyword>
<keyword id="KW-0807">Transducer</keyword>
<keyword id="KW-0812">Transmembrane</keyword>
<keyword id="KW-1133">Transmembrane helix</keyword>
<keyword id="KW-0844">Vision</keyword>
<reference key="1">
    <citation type="submission" date="1999-01" db="EMBL/GenBank/DDBJ databases">
        <title>Comparative analysis of opsins in Mediterranian coastal fish.</title>
        <authorList>
            <person name="Archer S.N."/>
            <person name="Hirano J."/>
        </authorList>
    </citation>
    <scope>NUCLEOTIDE SEQUENCE [MRNA]</scope>
    <source>
        <tissue>Retina</tissue>
    </source>
</reference>
<dbReference type="EMBL" id="Y18676">
    <property type="protein sequence ID" value="CAA77258.1"/>
    <property type="molecule type" value="mRNA"/>
</dbReference>
<dbReference type="SMR" id="Q9YGZ1"/>
<dbReference type="GlyCosmos" id="Q9YGZ1">
    <property type="glycosylation" value="3 sites, No reported glycans"/>
</dbReference>
<dbReference type="GO" id="GO:0016020">
    <property type="term" value="C:membrane"/>
    <property type="evidence" value="ECO:0000250"/>
    <property type="project" value="UniProtKB"/>
</dbReference>
<dbReference type="GO" id="GO:0097381">
    <property type="term" value="C:photoreceptor disc membrane"/>
    <property type="evidence" value="ECO:0000250"/>
    <property type="project" value="UniProtKB"/>
</dbReference>
<dbReference type="GO" id="GO:0005886">
    <property type="term" value="C:plasma membrane"/>
    <property type="evidence" value="ECO:0000250"/>
    <property type="project" value="UniProtKB"/>
</dbReference>
<dbReference type="GO" id="GO:0005502">
    <property type="term" value="F:11-cis retinal binding"/>
    <property type="evidence" value="ECO:0000250"/>
    <property type="project" value="UniProtKB"/>
</dbReference>
<dbReference type="GO" id="GO:0008020">
    <property type="term" value="F:G protein-coupled photoreceptor activity"/>
    <property type="evidence" value="ECO:0000250"/>
    <property type="project" value="UniProtKB"/>
</dbReference>
<dbReference type="GO" id="GO:0016038">
    <property type="term" value="P:absorption of visible light"/>
    <property type="evidence" value="ECO:0000250"/>
    <property type="project" value="UniProtKB"/>
</dbReference>
<dbReference type="GO" id="GO:0016056">
    <property type="term" value="P:G protein-coupled opsin signaling pathway"/>
    <property type="evidence" value="ECO:0000250"/>
    <property type="project" value="UniProtKB"/>
</dbReference>
<dbReference type="GO" id="GO:0007601">
    <property type="term" value="P:visual perception"/>
    <property type="evidence" value="ECO:0007669"/>
    <property type="project" value="UniProtKB-KW"/>
</dbReference>
<dbReference type="CDD" id="cd15080">
    <property type="entry name" value="7tmA_MWS_opsin"/>
    <property type="match status" value="1"/>
</dbReference>
<dbReference type="FunFam" id="1.20.1070.10:FF:000018">
    <property type="entry name" value="Rhodopsin"/>
    <property type="match status" value="1"/>
</dbReference>
<dbReference type="Gene3D" id="1.20.1070.10">
    <property type="entry name" value="Rhodopsin 7-helix transmembrane proteins"/>
    <property type="match status" value="1"/>
</dbReference>
<dbReference type="InterPro" id="IPR050125">
    <property type="entry name" value="GPCR_opsins"/>
</dbReference>
<dbReference type="InterPro" id="IPR000276">
    <property type="entry name" value="GPCR_Rhodpsn"/>
</dbReference>
<dbReference type="InterPro" id="IPR017452">
    <property type="entry name" value="GPCR_Rhodpsn_7TM"/>
</dbReference>
<dbReference type="InterPro" id="IPR001760">
    <property type="entry name" value="Opsin"/>
</dbReference>
<dbReference type="InterPro" id="IPR027430">
    <property type="entry name" value="Retinal_BS"/>
</dbReference>
<dbReference type="InterPro" id="IPR000732">
    <property type="entry name" value="Rhodopsin"/>
</dbReference>
<dbReference type="InterPro" id="IPR019477">
    <property type="entry name" value="Rhodopsin_N"/>
</dbReference>
<dbReference type="PANTHER" id="PTHR24240">
    <property type="entry name" value="OPSIN"/>
    <property type="match status" value="1"/>
</dbReference>
<dbReference type="Pfam" id="PF00001">
    <property type="entry name" value="7tm_1"/>
    <property type="match status" value="1"/>
</dbReference>
<dbReference type="Pfam" id="PF10413">
    <property type="entry name" value="Rhodopsin_N"/>
    <property type="match status" value="1"/>
</dbReference>
<dbReference type="PRINTS" id="PR00237">
    <property type="entry name" value="GPCRRHODOPSN"/>
</dbReference>
<dbReference type="PRINTS" id="PR00238">
    <property type="entry name" value="OPSIN"/>
</dbReference>
<dbReference type="PRINTS" id="PR00579">
    <property type="entry name" value="RHODOPSIN"/>
</dbReference>
<dbReference type="SUPFAM" id="SSF81321">
    <property type="entry name" value="Family A G protein-coupled receptor-like"/>
    <property type="match status" value="1"/>
</dbReference>
<dbReference type="PROSITE" id="PS00237">
    <property type="entry name" value="G_PROTEIN_RECEP_F1_1"/>
    <property type="match status" value="1"/>
</dbReference>
<dbReference type="PROSITE" id="PS50262">
    <property type="entry name" value="G_PROTEIN_RECEP_F1_2"/>
    <property type="match status" value="1"/>
</dbReference>
<dbReference type="PROSITE" id="PS00238">
    <property type="entry name" value="OPSIN"/>
    <property type="match status" value="1"/>
</dbReference>
<proteinExistence type="evidence at transcript level"/>
<organism>
    <name type="scientific">Atherina boyeri</name>
    <name type="common">Big-scale sand smelt</name>
    <dbReference type="NCBI Taxonomy" id="87785"/>
    <lineage>
        <taxon>Eukaryota</taxon>
        <taxon>Metazoa</taxon>
        <taxon>Chordata</taxon>
        <taxon>Craniata</taxon>
        <taxon>Vertebrata</taxon>
        <taxon>Euteleostomi</taxon>
        <taxon>Actinopterygii</taxon>
        <taxon>Neopterygii</taxon>
        <taxon>Teleostei</taxon>
        <taxon>Neoteleostei</taxon>
        <taxon>Acanthomorphata</taxon>
        <taxon>Ovalentaria</taxon>
        <taxon>Atherinomorphae</taxon>
        <taxon>Atheriniformes</taxon>
        <taxon>Atherinidae</taxon>
        <taxon>Atherininae</taxon>
        <taxon>Atherina</taxon>
    </lineage>
</organism>